<protein>
    <recommendedName>
        <fullName evidence="1">Urease accessory protein UreD</fullName>
    </recommendedName>
</protein>
<dbReference type="EMBL" id="AJ938182">
    <property type="protein sequence ID" value="CAI81855.1"/>
    <property type="molecule type" value="Genomic_DNA"/>
</dbReference>
<dbReference type="RefSeq" id="WP_000344345.1">
    <property type="nucleotide sequence ID" value="NC_007622.1"/>
</dbReference>
<dbReference type="SMR" id="Q2YYV1"/>
<dbReference type="KEGG" id="sab:SAB2166"/>
<dbReference type="HOGENOM" id="CLU_056339_5_0_9"/>
<dbReference type="GO" id="GO:0005737">
    <property type="term" value="C:cytoplasm"/>
    <property type="evidence" value="ECO:0007669"/>
    <property type="project" value="UniProtKB-SubCell"/>
</dbReference>
<dbReference type="GO" id="GO:0016151">
    <property type="term" value="F:nickel cation binding"/>
    <property type="evidence" value="ECO:0007669"/>
    <property type="project" value="UniProtKB-UniRule"/>
</dbReference>
<dbReference type="HAMAP" id="MF_01384">
    <property type="entry name" value="UreD"/>
    <property type="match status" value="1"/>
</dbReference>
<dbReference type="InterPro" id="IPR002669">
    <property type="entry name" value="UreD"/>
</dbReference>
<dbReference type="PANTHER" id="PTHR33643">
    <property type="entry name" value="UREASE ACCESSORY PROTEIN D"/>
    <property type="match status" value="1"/>
</dbReference>
<dbReference type="PANTHER" id="PTHR33643:SF1">
    <property type="entry name" value="UREASE ACCESSORY PROTEIN D"/>
    <property type="match status" value="1"/>
</dbReference>
<dbReference type="Pfam" id="PF01774">
    <property type="entry name" value="UreD"/>
    <property type="match status" value="1"/>
</dbReference>
<reference key="1">
    <citation type="journal article" date="2007" name="PLoS ONE">
        <title>Molecular correlates of host specialization in Staphylococcus aureus.</title>
        <authorList>
            <person name="Herron-Olson L."/>
            <person name="Fitzgerald J.R."/>
            <person name="Musser J.M."/>
            <person name="Kapur V."/>
        </authorList>
    </citation>
    <scope>NUCLEOTIDE SEQUENCE [LARGE SCALE GENOMIC DNA]</scope>
    <source>
        <strain>bovine RF122 / ET3-1</strain>
    </source>
</reference>
<evidence type="ECO:0000255" key="1">
    <source>
        <dbReference type="HAMAP-Rule" id="MF_01384"/>
    </source>
</evidence>
<feature type="chain" id="PRO_0000346594" description="Urease accessory protein UreD">
    <location>
        <begin position="1"/>
        <end position="278"/>
    </location>
</feature>
<proteinExistence type="inferred from homology"/>
<comment type="function">
    <text evidence="1">Required for maturation of urease via the functional incorporation of the urease nickel metallocenter.</text>
</comment>
<comment type="subunit">
    <text evidence="1">UreD, UreF and UreG form a complex that acts as a GTP-hydrolysis-dependent molecular chaperone, activating the urease apoprotein by helping to assemble the nickel containing metallocenter of UreC. The UreE protein probably delivers the nickel.</text>
</comment>
<comment type="subcellular location">
    <subcellularLocation>
        <location evidence="1">Cytoplasm</location>
    </subcellularLocation>
</comment>
<comment type="similarity">
    <text evidence="1">Belongs to the UreD family.</text>
</comment>
<keyword id="KW-0143">Chaperone</keyword>
<keyword id="KW-0963">Cytoplasm</keyword>
<keyword id="KW-0996">Nickel insertion</keyword>
<gene>
    <name evidence="1" type="primary">ureD</name>
    <name type="ordered locus">SAB2166</name>
</gene>
<name>URED_STAAB</name>
<sequence length="278" mass="32417">MDEQQWTGQLDLTVFFDGNRSVSRDIFFEKALKVIRPVYLNQSTIPTFYIVNVGGGYLDGDRYRMNVNIEDNAKVTLTSQGATKIYKTPSNHVEQYQTFNLKDNAYLEYVADPIIAYENAKFYQHNTLNLNNSSSLFYTDILTPGYSKTGEAFKYQYMHLINEIYIEDELVTYDNLLLNPNKQSINEIGYMEHYSHYGSAYFIHEDVNQKLIDSVYETISSYSNTFDCRVAISQLPTHGFAVRIFAYRTQIIEKILGTIQSYIAENIYDRKLDFLRKY</sequence>
<organism>
    <name type="scientific">Staphylococcus aureus (strain bovine RF122 / ET3-1)</name>
    <dbReference type="NCBI Taxonomy" id="273036"/>
    <lineage>
        <taxon>Bacteria</taxon>
        <taxon>Bacillati</taxon>
        <taxon>Bacillota</taxon>
        <taxon>Bacilli</taxon>
        <taxon>Bacillales</taxon>
        <taxon>Staphylococcaceae</taxon>
        <taxon>Staphylococcus</taxon>
    </lineage>
</organism>
<accession>Q2YYV1</accession>